<organism>
    <name type="scientific">Shewanella putrefaciens (strain CN-32 / ATCC BAA-453)</name>
    <dbReference type="NCBI Taxonomy" id="319224"/>
    <lineage>
        <taxon>Bacteria</taxon>
        <taxon>Pseudomonadati</taxon>
        <taxon>Pseudomonadota</taxon>
        <taxon>Gammaproteobacteria</taxon>
        <taxon>Alteromonadales</taxon>
        <taxon>Shewanellaceae</taxon>
        <taxon>Shewanella</taxon>
    </lineage>
</organism>
<proteinExistence type="inferred from homology"/>
<sequence length="311" mass="32109">MKVAVLGAAGGIGQALALLLKTQLPAGSKLSLYDIAPVTPGVAVDLSHIPTAVEIKGFAGEDPTPALVGADVVLISAGVARKPGMDRSDLFNINAGIVRNLIEKVAATCPKALVGIITNPVNTTVAIAAEVMKKAGVYDKNRLFGVTTLDVIRSETFIAELKGLNVADVKINVIGGHSGVTILPLLSQVEGVTFSDEEVASLTKRIQNAGTEVVEAKAGGGSATLSMGQAACRFGMSLVRGLQGEANVVECAYVDGGSEHAEFFAQPVLLGKNGIEKVLPYGEVSAFEANARDSMLDTLKGDIKLGVDFVK</sequence>
<dbReference type="EC" id="1.1.1.37" evidence="1"/>
<dbReference type="EMBL" id="CP000681">
    <property type="protein sequence ID" value="ABP76931.1"/>
    <property type="molecule type" value="Genomic_DNA"/>
</dbReference>
<dbReference type="SMR" id="A4YAE8"/>
<dbReference type="STRING" id="319224.Sputcn32_3219"/>
<dbReference type="KEGG" id="spc:Sputcn32_3219"/>
<dbReference type="eggNOG" id="COG0039">
    <property type="taxonomic scope" value="Bacteria"/>
</dbReference>
<dbReference type="HOGENOM" id="CLU_047181_0_1_6"/>
<dbReference type="GO" id="GO:0005737">
    <property type="term" value="C:cytoplasm"/>
    <property type="evidence" value="ECO:0007669"/>
    <property type="project" value="TreeGrafter"/>
</dbReference>
<dbReference type="GO" id="GO:0030060">
    <property type="term" value="F:L-malate dehydrogenase (NAD+) activity"/>
    <property type="evidence" value="ECO:0007669"/>
    <property type="project" value="UniProtKB-UniRule"/>
</dbReference>
<dbReference type="GO" id="GO:0006108">
    <property type="term" value="P:malate metabolic process"/>
    <property type="evidence" value="ECO:0007669"/>
    <property type="project" value="InterPro"/>
</dbReference>
<dbReference type="GO" id="GO:0006099">
    <property type="term" value="P:tricarboxylic acid cycle"/>
    <property type="evidence" value="ECO:0007669"/>
    <property type="project" value="UniProtKB-UniRule"/>
</dbReference>
<dbReference type="CDD" id="cd01337">
    <property type="entry name" value="MDH_glyoxysomal_mitochondrial"/>
    <property type="match status" value="1"/>
</dbReference>
<dbReference type="FunFam" id="3.40.50.720:FF:000017">
    <property type="entry name" value="Malate dehydrogenase"/>
    <property type="match status" value="1"/>
</dbReference>
<dbReference type="FunFam" id="3.90.110.10:FF:000001">
    <property type="entry name" value="Malate dehydrogenase"/>
    <property type="match status" value="1"/>
</dbReference>
<dbReference type="Gene3D" id="3.90.110.10">
    <property type="entry name" value="Lactate dehydrogenase/glycoside hydrolase, family 4, C-terminal"/>
    <property type="match status" value="1"/>
</dbReference>
<dbReference type="Gene3D" id="3.40.50.720">
    <property type="entry name" value="NAD(P)-binding Rossmann-like Domain"/>
    <property type="match status" value="1"/>
</dbReference>
<dbReference type="HAMAP" id="MF_01516">
    <property type="entry name" value="Malate_dehydrog_1"/>
    <property type="match status" value="1"/>
</dbReference>
<dbReference type="InterPro" id="IPR001557">
    <property type="entry name" value="L-lactate/malate_DH"/>
</dbReference>
<dbReference type="InterPro" id="IPR022383">
    <property type="entry name" value="Lactate/malate_DH_C"/>
</dbReference>
<dbReference type="InterPro" id="IPR001236">
    <property type="entry name" value="Lactate/malate_DH_N"/>
</dbReference>
<dbReference type="InterPro" id="IPR015955">
    <property type="entry name" value="Lactate_DH/Glyco_Ohase_4_C"/>
</dbReference>
<dbReference type="InterPro" id="IPR001252">
    <property type="entry name" value="Malate_DH_AS"/>
</dbReference>
<dbReference type="InterPro" id="IPR010097">
    <property type="entry name" value="Malate_DH_type1"/>
</dbReference>
<dbReference type="InterPro" id="IPR023958">
    <property type="entry name" value="Malate_DH_type1_bac"/>
</dbReference>
<dbReference type="InterPro" id="IPR036291">
    <property type="entry name" value="NAD(P)-bd_dom_sf"/>
</dbReference>
<dbReference type="NCBIfam" id="TIGR01772">
    <property type="entry name" value="MDH_euk_gproteo"/>
    <property type="match status" value="1"/>
</dbReference>
<dbReference type="PANTHER" id="PTHR11540">
    <property type="entry name" value="MALATE AND LACTATE DEHYDROGENASE"/>
    <property type="match status" value="1"/>
</dbReference>
<dbReference type="PANTHER" id="PTHR11540:SF16">
    <property type="entry name" value="MALATE DEHYDROGENASE, MITOCHONDRIAL"/>
    <property type="match status" value="1"/>
</dbReference>
<dbReference type="Pfam" id="PF02866">
    <property type="entry name" value="Ldh_1_C"/>
    <property type="match status" value="1"/>
</dbReference>
<dbReference type="Pfam" id="PF00056">
    <property type="entry name" value="Ldh_1_N"/>
    <property type="match status" value="1"/>
</dbReference>
<dbReference type="PIRSF" id="PIRSF000102">
    <property type="entry name" value="Lac_mal_DH"/>
    <property type="match status" value="1"/>
</dbReference>
<dbReference type="SUPFAM" id="SSF56327">
    <property type="entry name" value="LDH C-terminal domain-like"/>
    <property type="match status" value="1"/>
</dbReference>
<dbReference type="SUPFAM" id="SSF51735">
    <property type="entry name" value="NAD(P)-binding Rossmann-fold domains"/>
    <property type="match status" value="1"/>
</dbReference>
<dbReference type="PROSITE" id="PS00068">
    <property type="entry name" value="MDH"/>
    <property type="match status" value="1"/>
</dbReference>
<accession>A4YAE8</accession>
<comment type="function">
    <text evidence="1">Catalyzes the reversible oxidation of malate to oxaloacetate.</text>
</comment>
<comment type="catalytic activity">
    <reaction evidence="1">
        <text>(S)-malate + NAD(+) = oxaloacetate + NADH + H(+)</text>
        <dbReference type="Rhea" id="RHEA:21432"/>
        <dbReference type="ChEBI" id="CHEBI:15378"/>
        <dbReference type="ChEBI" id="CHEBI:15589"/>
        <dbReference type="ChEBI" id="CHEBI:16452"/>
        <dbReference type="ChEBI" id="CHEBI:57540"/>
        <dbReference type="ChEBI" id="CHEBI:57945"/>
        <dbReference type="EC" id="1.1.1.37"/>
    </reaction>
</comment>
<comment type="subunit">
    <text evidence="1">Homodimer.</text>
</comment>
<comment type="similarity">
    <text evidence="1">Belongs to the LDH/MDH superfamily. MDH type 1 family.</text>
</comment>
<gene>
    <name evidence="1" type="primary">mdh</name>
    <name type="ordered locus">Sputcn32_3219</name>
</gene>
<keyword id="KW-0520">NAD</keyword>
<keyword id="KW-0560">Oxidoreductase</keyword>
<keyword id="KW-0816">Tricarboxylic acid cycle</keyword>
<feature type="chain" id="PRO_1000068594" description="Malate dehydrogenase">
    <location>
        <begin position="1"/>
        <end position="311"/>
    </location>
</feature>
<feature type="active site" description="Proton acceptor" evidence="1">
    <location>
        <position position="177"/>
    </location>
</feature>
<feature type="binding site" evidence="1">
    <location>
        <begin position="7"/>
        <end position="13"/>
    </location>
    <ligand>
        <name>NAD(+)</name>
        <dbReference type="ChEBI" id="CHEBI:57540"/>
    </ligand>
</feature>
<feature type="binding site" evidence="1">
    <location>
        <position position="34"/>
    </location>
    <ligand>
        <name>NAD(+)</name>
        <dbReference type="ChEBI" id="CHEBI:57540"/>
    </ligand>
</feature>
<feature type="binding site" evidence="1">
    <location>
        <position position="81"/>
    </location>
    <ligand>
        <name>substrate</name>
    </ligand>
</feature>
<feature type="binding site" evidence="1">
    <location>
        <position position="87"/>
    </location>
    <ligand>
        <name>substrate</name>
    </ligand>
</feature>
<feature type="binding site" evidence="1">
    <location>
        <position position="94"/>
    </location>
    <ligand>
        <name>NAD(+)</name>
        <dbReference type="ChEBI" id="CHEBI:57540"/>
    </ligand>
</feature>
<feature type="binding site" evidence="1">
    <location>
        <begin position="117"/>
        <end position="119"/>
    </location>
    <ligand>
        <name>NAD(+)</name>
        <dbReference type="ChEBI" id="CHEBI:57540"/>
    </ligand>
</feature>
<feature type="binding site" evidence="1">
    <location>
        <position position="119"/>
    </location>
    <ligand>
        <name>substrate</name>
    </ligand>
</feature>
<feature type="binding site" evidence="1">
    <location>
        <position position="153"/>
    </location>
    <ligand>
        <name>substrate</name>
    </ligand>
</feature>
<feature type="binding site" evidence="1">
    <location>
        <position position="227"/>
    </location>
    <ligand>
        <name>NAD(+)</name>
        <dbReference type="ChEBI" id="CHEBI:57540"/>
    </ligand>
</feature>
<evidence type="ECO:0000255" key="1">
    <source>
        <dbReference type="HAMAP-Rule" id="MF_01516"/>
    </source>
</evidence>
<name>MDH_SHEPC</name>
<protein>
    <recommendedName>
        <fullName evidence="1">Malate dehydrogenase</fullName>
        <ecNumber evidence="1">1.1.1.37</ecNumber>
    </recommendedName>
</protein>
<reference key="1">
    <citation type="submission" date="2007-04" db="EMBL/GenBank/DDBJ databases">
        <title>Complete sequence of Shewanella putrefaciens CN-32.</title>
        <authorList>
            <consortium name="US DOE Joint Genome Institute"/>
            <person name="Copeland A."/>
            <person name="Lucas S."/>
            <person name="Lapidus A."/>
            <person name="Barry K."/>
            <person name="Detter J.C."/>
            <person name="Glavina del Rio T."/>
            <person name="Hammon N."/>
            <person name="Israni S."/>
            <person name="Dalin E."/>
            <person name="Tice H."/>
            <person name="Pitluck S."/>
            <person name="Chain P."/>
            <person name="Malfatti S."/>
            <person name="Shin M."/>
            <person name="Vergez L."/>
            <person name="Schmutz J."/>
            <person name="Larimer F."/>
            <person name="Land M."/>
            <person name="Hauser L."/>
            <person name="Kyrpides N."/>
            <person name="Mikhailova N."/>
            <person name="Romine M.F."/>
            <person name="Fredrickson J."/>
            <person name="Tiedje J."/>
            <person name="Richardson P."/>
        </authorList>
    </citation>
    <scope>NUCLEOTIDE SEQUENCE [LARGE SCALE GENOMIC DNA]</scope>
    <source>
        <strain>CN-32 / ATCC BAA-453</strain>
    </source>
</reference>